<reference key="1">
    <citation type="journal article" date="2008" name="BMC Genomics">
        <title>The genome sequence of the fish pathogen Aliivibrio salmonicida strain LFI1238 shows extensive evidence of gene decay.</title>
        <authorList>
            <person name="Hjerde E."/>
            <person name="Lorentzen M.S."/>
            <person name="Holden M.T."/>
            <person name="Seeger K."/>
            <person name="Paulsen S."/>
            <person name="Bason N."/>
            <person name="Churcher C."/>
            <person name="Harris D."/>
            <person name="Norbertczak H."/>
            <person name="Quail M.A."/>
            <person name="Sanders S."/>
            <person name="Thurston S."/>
            <person name="Parkhill J."/>
            <person name="Willassen N.P."/>
            <person name="Thomson N.R."/>
        </authorList>
    </citation>
    <scope>NUCLEOTIDE SEQUENCE [LARGE SCALE GENOMIC DNA]</scope>
    <source>
        <strain>LFI1238</strain>
    </source>
</reference>
<name>RL6_ALISL</name>
<sequence length="177" mass="18867">MSRVAKAPVVLPAGVEVKLNGQEITIKGGKGELTRVLNNAVVVSQEDNSIVFGPREGVANAWAQAGTARALVNNMVVGVNEGFTKKLTLKGVGYRATMKGNAVGLTLGFSHPVEHALPEGIKAECPTQTEIIITGCDKQVVGQVAADIRSYRKPEPYKGKGVRYADEIVRTKEAKKK</sequence>
<feature type="chain" id="PRO_1000143939" description="Large ribosomal subunit protein uL6">
    <location>
        <begin position="1"/>
        <end position="177"/>
    </location>
</feature>
<proteinExistence type="inferred from homology"/>
<dbReference type="EMBL" id="FM178379">
    <property type="protein sequence ID" value="CAQ78020.1"/>
    <property type="molecule type" value="Genomic_DNA"/>
</dbReference>
<dbReference type="RefSeq" id="WP_012549164.1">
    <property type="nucleotide sequence ID" value="NC_011312.1"/>
</dbReference>
<dbReference type="SMR" id="B6EPU0"/>
<dbReference type="KEGG" id="vsa:VSAL_I0335"/>
<dbReference type="eggNOG" id="COG0097">
    <property type="taxonomic scope" value="Bacteria"/>
</dbReference>
<dbReference type="HOGENOM" id="CLU_065464_1_2_6"/>
<dbReference type="Proteomes" id="UP000001730">
    <property type="component" value="Chromosome 1"/>
</dbReference>
<dbReference type="GO" id="GO:0022625">
    <property type="term" value="C:cytosolic large ribosomal subunit"/>
    <property type="evidence" value="ECO:0007669"/>
    <property type="project" value="TreeGrafter"/>
</dbReference>
<dbReference type="GO" id="GO:0019843">
    <property type="term" value="F:rRNA binding"/>
    <property type="evidence" value="ECO:0007669"/>
    <property type="project" value="UniProtKB-UniRule"/>
</dbReference>
<dbReference type="GO" id="GO:0003735">
    <property type="term" value="F:structural constituent of ribosome"/>
    <property type="evidence" value="ECO:0007669"/>
    <property type="project" value="InterPro"/>
</dbReference>
<dbReference type="GO" id="GO:0002181">
    <property type="term" value="P:cytoplasmic translation"/>
    <property type="evidence" value="ECO:0007669"/>
    <property type="project" value="TreeGrafter"/>
</dbReference>
<dbReference type="FunFam" id="3.90.930.12:FF:000001">
    <property type="entry name" value="50S ribosomal protein L6"/>
    <property type="match status" value="1"/>
</dbReference>
<dbReference type="FunFam" id="3.90.930.12:FF:000002">
    <property type="entry name" value="50S ribosomal protein L6"/>
    <property type="match status" value="1"/>
</dbReference>
<dbReference type="Gene3D" id="3.90.930.12">
    <property type="entry name" value="Ribosomal protein L6, alpha-beta domain"/>
    <property type="match status" value="2"/>
</dbReference>
<dbReference type="HAMAP" id="MF_01365_B">
    <property type="entry name" value="Ribosomal_uL6_B"/>
    <property type="match status" value="1"/>
</dbReference>
<dbReference type="InterPro" id="IPR000702">
    <property type="entry name" value="Ribosomal_uL6-like"/>
</dbReference>
<dbReference type="InterPro" id="IPR036789">
    <property type="entry name" value="Ribosomal_uL6-like_a/b-dom_sf"/>
</dbReference>
<dbReference type="InterPro" id="IPR020040">
    <property type="entry name" value="Ribosomal_uL6_a/b-dom"/>
</dbReference>
<dbReference type="InterPro" id="IPR019906">
    <property type="entry name" value="Ribosomal_uL6_bac-type"/>
</dbReference>
<dbReference type="InterPro" id="IPR002358">
    <property type="entry name" value="Ribosomal_uL6_CS"/>
</dbReference>
<dbReference type="NCBIfam" id="TIGR03654">
    <property type="entry name" value="L6_bact"/>
    <property type="match status" value="1"/>
</dbReference>
<dbReference type="PANTHER" id="PTHR11655">
    <property type="entry name" value="60S/50S RIBOSOMAL PROTEIN L6/L9"/>
    <property type="match status" value="1"/>
</dbReference>
<dbReference type="PANTHER" id="PTHR11655:SF14">
    <property type="entry name" value="LARGE RIBOSOMAL SUBUNIT PROTEIN UL6M"/>
    <property type="match status" value="1"/>
</dbReference>
<dbReference type="Pfam" id="PF00347">
    <property type="entry name" value="Ribosomal_L6"/>
    <property type="match status" value="2"/>
</dbReference>
<dbReference type="PIRSF" id="PIRSF002162">
    <property type="entry name" value="Ribosomal_L6"/>
    <property type="match status" value="1"/>
</dbReference>
<dbReference type="PRINTS" id="PR00059">
    <property type="entry name" value="RIBOSOMALL6"/>
</dbReference>
<dbReference type="SUPFAM" id="SSF56053">
    <property type="entry name" value="Ribosomal protein L6"/>
    <property type="match status" value="2"/>
</dbReference>
<dbReference type="PROSITE" id="PS00525">
    <property type="entry name" value="RIBOSOMAL_L6_1"/>
    <property type="match status" value="1"/>
</dbReference>
<evidence type="ECO:0000255" key="1">
    <source>
        <dbReference type="HAMAP-Rule" id="MF_01365"/>
    </source>
</evidence>
<evidence type="ECO:0000305" key="2"/>
<protein>
    <recommendedName>
        <fullName evidence="1">Large ribosomal subunit protein uL6</fullName>
    </recommendedName>
    <alternativeName>
        <fullName evidence="2">50S ribosomal protein L6</fullName>
    </alternativeName>
</protein>
<accession>B6EPU0</accession>
<comment type="function">
    <text evidence="1">This protein binds to the 23S rRNA, and is important in its secondary structure. It is located near the subunit interface in the base of the L7/L12 stalk, and near the tRNA binding site of the peptidyltransferase center.</text>
</comment>
<comment type="subunit">
    <text evidence="1">Part of the 50S ribosomal subunit.</text>
</comment>
<comment type="similarity">
    <text evidence="1">Belongs to the universal ribosomal protein uL6 family.</text>
</comment>
<organism>
    <name type="scientific">Aliivibrio salmonicida (strain LFI1238)</name>
    <name type="common">Vibrio salmonicida (strain LFI1238)</name>
    <dbReference type="NCBI Taxonomy" id="316275"/>
    <lineage>
        <taxon>Bacteria</taxon>
        <taxon>Pseudomonadati</taxon>
        <taxon>Pseudomonadota</taxon>
        <taxon>Gammaproteobacteria</taxon>
        <taxon>Vibrionales</taxon>
        <taxon>Vibrionaceae</taxon>
        <taxon>Aliivibrio</taxon>
    </lineage>
</organism>
<gene>
    <name evidence="1" type="primary">rplF</name>
    <name type="ordered locus">VSAL_I0335</name>
</gene>
<keyword id="KW-0687">Ribonucleoprotein</keyword>
<keyword id="KW-0689">Ribosomal protein</keyword>
<keyword id="KW-0694">RNA-binding</keyword>
<keyword id="KW-0699">rRNA-binding</keyword>